<feature type="chain" id="PRO_0000102557" description="Endoribonuclease YbeY">
    <location>
        <begin position="1"/>
        <end position="155"/>
    </location>
</feature>
<feature type="binding site" evidence="1">
    <location>
        <position position="117"/>
    </location>
    <ligand>
        <name>Zn(2+)</name>
        <dbReference type="ChEBI" id="CHEBI:29105"/>
        <note>catalytic</note>
    </ligand>
</feature>
<feature type="binding site" evidence="1">
    <location>
        <position position="121"/>
    </location>
    <ligand>
        <name>Zn(2+)</name>
        <dbReference type="ChEBI" id="CHEBI:29105"/>
        <note>catalytic</note>
    </ligand>
</feature>
<feature type="binding site" evidence="1">
    <location>
        <position position="127"/>
    </location>
    <ligand>
        <name>Zn(2+)</name>
        <dbReference type="ChEBI" id="CHEBI:29105"/>
        <note>catalytic</note>
    </ligand>
</feature>
<proteinExistence type="inferred from homology"/>
<name>YBEY_TREDE</name>
<accession>Q73NB3</accession>
<organism>
    <name type="scientific">Treponema denticola (strain ATCC 35405 / DSM 14222 / CIP 103919 / JCM 8153 / KCTC 15104)</name>
    <dbReference type="NCBI Taxonomy" id="243275"/>
    <lineage>
        <taxon>Bacteria</taxon>
        <taxon>Pseudomonadati</taxon>
        <taxon>Spirochaetota</taxon>
        <taxon>Spirochaetia</taxon>
        <taxon>Spirochaetales</taxon>
        <taxon>Treponemataceae</taxon>
        <taxon>Treponema</taxon>
    </lineage>
</organism>
<evidence type="ECO:0000255" key="1">
    <source>
        <dbReference type="HAMAP-Rule" id="MF_00009"/>
    </source>
</evidence>
<dbReference type="EC" id="3.1.-.-" evidence="1"/>
<dbReference type="EMBL" id="AE017226">
    <property type="protein sequence ID" value="AAS11760.1"/>
    <property type="molecule type" value="Genomic_DNA"/>
</dbReference>
<dbReference type="RefSeq" id="NP_971849.1">
    <property type="nucleotide sequence ID" value="NC_002967.9"/>
</dbReference>
<dbReference type="RefSeq" id="WP_002668517.1">
    <property type="nucleotide sequence ID" value="NC_002967.9"/>
</dbReference>
<dbReference type="SMR" id="Q73NB3"/>
<dbReference type="STRING" id="243275.TDE_1242"/>
<dbReference type="PaxDb" id="243275-TDE_1242"/>
<dbReference type="GeneID" id="2741184"/>
<dbReference type="KEGG" id="tde:TDE_1242"/>
<dbReference type="PATRIC" id="fig|243275.7.peg.1194"/>
<dbReference type="eggNOG" id="COG0319">
    <property type="taxonomic scope" value="Bacteria"/>
</dbReference>
<dbReference type="HOGENOM" id="CLU_106710_3_3_12"/>
<dbReference type="OrthoDB" id="9807740at2"/>
<dbReference type="Proteomes" id="UP000008212">
    <property type="component" value="Chromosome"/>
</dbReference>
<dbReference type="GO" id="GO:0005737">
    <property type="term" value="C:cytoplasm"/>
    <property type="evidence" value="ECO:0007669"/>
    <property type="project" value="UniProtKB-SubCell"/>
</dbReference>
<dbReference type="GO" id="GO:0004222">
    <property type="term" value="F:metalloendopeptidase activity"/>
    <property type="evidence" value="ECO:0007669"/>
    <property type="project" value="InterPro"/>
</dbReference>
<dbReference type="GO" id="GO:0004521">
    <property type="term" value="F:RNA endonuclease activity"/>
    <property type="evidence" value="ECO:0007669"/>
    <property type="project" value="UniProtKB-UniRule"/>
</dbReference>
<dbReference type="GO" id="GO:0008270">
    <property type="term" value="F:zinc ion binding"/>
    <property type="evidence" value="ECO:0007669"/>
    <property type="project" value="UniProtKB-UniRule"/>
</dbReference>
<dbReference type="GO" id="GO:0006364">
    <property type="term" value="P:rRNA processing"/>
    <property type="evidence" value="ECO:0007669"/>
    <property type="project" value="UniProtKB-UniRule"/>
</dbReference>
<dbReference type="Gene3D" id="3.40.390.30">
    <property type="entry name" value="Metalloproteases ('zincins'), catalytic domain"/>
    <property type="match status" value="1"/>
</dbReference>
<dbReference type="HAMAP" id="MF_00009">
    <property type="entry name" value="Endoribonucl_YbeY"/>
    <property type="match status" value="1"/>
</dbReference>
<dbReference type="InterPro" id="IPR023091">
    <property type="entry name" value="MetalPrtase_cat_dom_sf_prd"/>
</dbReference>
<dbReference type="InterPro" id="IPR002036">
    <property type="entry name" value="YbeY"/>
</dbReference>
<dbReference type="InterPro" id="IPR020549">
    <property type="entry name" value="YbeY_CS"/>
</dbReference>
<dbReference type="NCBIfam" id="TIGR00043">
    <property type="entry name" value="rRNA maturation RNase YbeY"/>
    <property type="match status" value="1"/>
</dbReference>
<dbReference type="PANTHER" id="PTHR46986">
    <property type="entry name" value="ENDORIBONUCLEASE YBEY, CHLOROPLASTIC"/>
    <property type="match status" value="1"/>
</dbReference>
<dbReference type="PANTHER" id="PTHR46986:SF1">
    <property type="entry name" value="ENDORIBONUCLEASE YBEY, CHLOROPLASTIC"/>
    <property type="match status" value="1"/>
</dbReference>
<dbReference type="Pfam" id="PF02130">
    <property type="entry name" value="YbeY"/>
    <property type="match status" value="1"/>
</dbReference>
<dbReference type="SUPFAM" id="SSF55486">
    <property type="entry name" value="Metalloproteases ('zincins'), catalytic domain"/>
    <property type="match status" value="1"/>
</dbReference>
<dbReference type="PROSITE" id="PS01306">
    <property type="entry name" value="UPF0054"/>
    <property type="match status" value="1"/>
</dbReference>
<protein>
    <recommendedName>
        <fullName evidence="1">Endoribonuclease YbeY</fullName>
        <ecNumber evidence="1">3.1.-.-</ecNumber>
    </recommendedName>
</protein>
<reference key="1">
    <citation type="journal article" date="2004" name="Proc. Natl. Acad. Sci. U.S.A.">
        <title>Comparison of the genome of the oral pathogen Treponema denticola with other spirochete genomes.</title>
        <authorList>
            <person name="Seshadri R."/>
            <person name="Myers G.S.A."/>
            <person name="Tettelin H."/>
            <person name="Eisen J.A."/>
            <person name="Heidelberg J.F."/>
            <person name="Dodson R.J."/>
            <person name="Davidsen T.M."/>
            <person name="DeBoy R.T."/>
            <person name="Fouts D.E."/>
            <person name="Haft D.H."/>
            <person name="Selengut J."/>
            <person name="Ren Q."/>
            <person name="Brinkac L.M."/>
            <person name="Madupu R."/>
            <person name="Kolonay J.F."/>
            <person name="Durkin S.A."/>
            <person name="Daugherty S.C."/>
            <person name="Shetty J."/>
            <person name="Shvartsbeyn A."/>
            <person name="Gebregeorgis E."/>
            <person name="Geer K."/>
            <person name="Tsegaye G."/>
            <person name="Malek J.A."/>
            <person name="Ayodeji B."/>
            <person name="Shatsman S."/>
            <person name="McLeod M.P."/>
            <person name="Smajs D."/>
            <person name="Howell J.K."/>
            <person name="Pal S."/>
            <person name="Amin A."/>
            <person name="Vashisth P."/>
            <person name="McNeill T.Z."/>
            <person name="Xiang Q."/>
            <person name="Sodergren E."/>
            <person name="Baca E."/>
            <person name="Weinstock G.M."/>
            <person name="Norris S.J."/>
            <person name="Fraser C.M."/>
            <person name="Paulsen I.T."/>
        </authorList>
    </citation>
    <scope>NUCLEOTIDE SEQUENCE [LARGE SCALE GENOMIC DNA]</scope>
    <source>
        <strain>ATCC 35405 / DSM 14222 / CIP 103919 / JCM 8153 / KCTC 15104</strain>
    </source>
</reference>
<sequence>MSNSISVSFNDEPPGSIDPVRVENFISEVLKDLNLKNWDISLLFCDDAFIQNLNKQYRDIDSPTDVLSFEQGDEYFDEAGETRFMAGDIVISLDSLSFNAEEFNVDINEELKRLIVHGILHLNGMDHSDNSPEQEMLKFQEELLMQYKNMEIYRV</sequence>
<keyword id="KW-0963">Cytoplasm</keyword>
<keyword id="KW-0255">Endonuclease</keyword>
<keyword id="KW-0378">Hydrolase</keyword>
<keyword id="KW-0479">Metal-binding</keyword>
<keyword id="KW-0540">Nuclease</keyword>
<keyword id="KW-1185">Reference proteome</keyword>
<keyword id="KW-0690">Ribosome biogenesis</keyword>
<keyword id="KW-0698">rRNA processing</keyword>
<keyword id="KW-0862">Zinc</keyword>
<gene>
    <name evidence="1" type="primary">ybeY</name>
    <name type="ordered locus">TDE_1242</name>
</gene>
<comment type="function">
    <text evidence="1">Single strand-specific metallo-endoribonuclease involved in late-stage 70S ribosome quality control and in maturation of the 3' terminus of the 16S rRNA.</text>
</comment>
<comment type="cofactor">
    <cofactor evidence="1">
        <name>Zn(2+)</name>
        <dbReference type="ChEBI" id="CHEBI:29105"/>
    </cofactor>
    <text evidence="1">Binds 1 zinc ion.</text>
</comment>
<comment type="subcellular location">
    <subcellularLocation>
        <location evidence="1">Cytoplasm</location>
    </subcellularLocation>
</comment>
<comment type="similarity">
    <text evidence="1">Belongs to the endoribonuclease YbeY family.</text>
</comment>